<proteinExistence type="evidence at transcript level"/>
<feature type="transit peptide" description="Chloroplast" evidence="2">
    <location>
        <begin position="1"/>
        <end status="unknown"/>
    </location>
</feature>
<feature type="chain" id="PRO_0000035783" description="Tryptophan synthase beta chain 1, chloroplastic">
    <location>
        <begin status="unknown"/>
        <end position="470"/>
    </location>
</feature>
<feature type="region of interest" description="Disordered" evidence="3">
    <location>
        <begin position="1"/>
        <end position="24"/>
    </location>
</feature>
<feature type="compositionally biased region" description="Polar residues" evidence="3">
    <location>
        <begin position="1"/>
        <end position="10"/>
    </location>
</feature>
<feature type="compositionally biased region" description="Low complexity" evidence="3">
    <location>
        <begin position="12"/>
        <end position="22"/>
    </location>
</feature>
<feature type="modified residue" description="N6-(pyridoxal phosphate)lysine" evidence="1">
    <location>
        <position position="165"/>
    </location>
</feature>
<organism>
    <name type="scientific">Arabidopsis thaliana</name>
    <name type="common">Mouse-ear cress</name>
    <dbReference type="NCBI Taxonomy" id="3702"/>
    <lineage>
        <taxon>Eukaryota</taxon>
        <taxon>Viridiplantae</taxon>
        <taxon>Streptophyta</taxon>
        <taxon>Embryophyta</taxon>
        <taxon>Tracheophyta</taxon>
        <taxon>Spermatophyta</taxon>
        <taxon>Magnoliopsida</taxon>
        <taxon>eudicotyledons</taxon>
        <taxon>Gunneridae</taxon>
        <taxon>Pentapetalae</taxon>
        <taxon>rosids</taxon>
        <taxon>malvids</taxon>
        <taxon>Brassicales</taxon>
        <taxon>Brassicaceae</taxon>
        <taxon>Camelineae</taxon>
        <taxon>Arabidopsis</taxon>
    </lineage>
</organism>
<keyword id="KW-0028">Amino-acid biosynthesis</keyword>
<keyword id="KW-0057">Aromatic amino acid biosynthesis</keyword>
<keyword id="KW-0150">Chloroplast</keyword>
<keyword id="KW-0456">Lyase</keyword>
<keyword id="KW-0934">Plastid</keyword>
<keyword id="KW-0663">Pyridoxal phosphate</keyword>
<keyword id="KW-1185">Reference proteome</keyword>
<keyword id="KW-0809">Transit peptide</keyword>
<keyword id="KW-0822">Tryptophan biosynthesis</keyword>
<evidence type="ECO:0000250" key="1"/>
<evidence type="ECO:0000255" key="2"/>
<evidence type="ECO:0000256" key="3">
    <source>
        <dbReference type="SAM" id="MobiDB-lite"/>
    </source>
</evidence>
<evidence type="ECO:0000305" key="4"/>
<comment type="function">
    <text>The beta subunit is responsible for the synthesis of L-tryptophan from indole and L-serine.</text>
</comment>
<comment type="catalytic activity">
    <reaction>
        <text>(1S,2R)-1-C-(indol-3-yl)glycerol 3-phosphate + L-serine = D-glyceraldehyde 3-phosphate + L-tryptophan + H2O</text>
        <dbReference type="Rhea" id="RHEA:10532"/>
        <dbReference type="ChEBI" id="CHEBI:15377"/>
        <dbReference type="ChEBI" id="CHEBI:33384"/>
        <dbReference type="ChEBI" id="CHEBI:57912"/>
        <dbReference type="ChEBI" id="CHEBI:58866"/>
        <dbReference type="ChEBI" id="CHEBI:59776"/>
        <dbReference type="EC" id="4.2.1.20"/>
    </reaction>
</comment>
<comment type="cofactor">
    <cofactor>
        <name>pyridoxal 5'-phosphate</name>
        <dbReference type="ChEBI" id="CHEBI:597326"/>
    </cofactor>
</comment>
<comment type="pathway">
    <text>Amino-acid biosynthesis; L-tryptophan biosynthesis; L-tryptophan from chorismate: step 5/5.</text>
</comment>
<comment type="subunit">
    <text>Tetramer of two alpha and two beta chains.</text>
</comment>
<comment type="subcellular location">
    <subcellularLocation>
        <location evidence="4">Plastid</location>
        <location evidence="4">Chloroplast</location>
    </subcellularLocation>
</comment>
<comment type="similarity">
    <text evidence="4">Belongs to the TrpB family.</text>
</comment>
<dbReference type="EC" id="4.2.1.20"/>
<dbReference type="EMBL" id="M23872">
    <property type="protein sequence ID" value="AAA32878.1"/>
    <property type="molecule type" value="Genomic_DNA"/>
</dbReference>
<dbReference type="EMBL" id="AB005232">
    <property type="protein sequence ID" value="BAB08760.1"/>
    <property type="molecule type" value="Genomic_DNA"/>
</dbReference>
<dbReference type="EMBL" id="CP002688">
    <property type="protein sequence ID" value="AED96543.1"/>
    <property type="molecule type" value="Genomic_DNA"/>
</dbReference>
<dbReference type="EMBL" id="AF367264">
    <property type="protein sequence ID" value="AAK56253.1"/>
    <property type="molecule type" value="mRNA"/>
</dbReference>
<dbReference type="EMBL" id="AY133620">
    <property type="protein sequence ID" value="AAM91450.1"/>
    <property type="molecule type" value="mRNA"/>
</dbReference>
<dbReference type="EMBL" id="AY087382">
    <property type="protein sequence ID" value="AAM64932.1"/>
    <property type="molecule type" value="mRNA"/>
</dbReference>
<dbReference type="PIR" id="A33929">
    <property type="entry name" value="A31393"/>
</dbReference>
<dbReference type="RefSeq" id="NP_200292.1">
    <property type="nucleotide sequence ID" value="NM_124862.5"/>
</dbReference>
<dbReference type="SMR" id="P14671"/>
<dbReference type="BioGRID" id="20815">
    <property type="interactions" value="5"/>
</dbReference>
<dbReference type="FunCoup" id="P14671">
    <property type="interactions" value="756"/>
</dbReference>
<dbReference type="IntAct" id="P14671">
    <property type="interactions" value="1"/>
</dbReference>
<dbReference type="STRING" id="3702.P14671"/>
<dbReference type="iPTMnet" id="P14671"/>
<dbReference type="PaxDb" id="3702-AT5G54810.1"/>
<dbReference type="ProteomicsDB" id="232385"/>
<dbReference type="EnsemblPlants" id="AT5G54810.1">
    <property type="protein sequence ID" value="AT5G54810.1"/>
    <property type="gene ID" value="AT5G54810"/>
</dbReference>
<dbReference type="GeneID" id="835571"/>
<dbReference type="Gramene" id="AT5G54810.1">
    <property type="protein sequence ID" value="AT5G54810.1"/>
    <property type="gene ID" value="AT5G54810"/>
</dbReference>
<dbReference type="KEGG" id="ath:AT5G54810"/>
<dbReference type="Araport" id="AT5G54810"/>
<dbReference type="TAIR" id="AT5G54810">
    <property type="gene designation" value="TSB1"/>
</dbReference>
<dbReference type="eggNOG" id="KOG1395">
    <property type="taxonomic scope" value="Eukaryota"/>
</dbReference>
<dbReference type="HOGENOM" id="CLU_016734_3_1_1"/>
<dbReference type="InParanoid" id="P14671"/>
<dbReference type="OMA" id="GPEHAMF"/>
<dbReference type="OrthoDB" id="10050244at2759"/>
<dbReference type="PhylomeDB" id="P14671"/>
<dbReference type="BioCyc" id="ARA:AT5G54810-MONOMER"/>
<dbReference type="BioCyc" id="MetaCyc:AT5G54810-MONOMER"/>
<dbReference type="BRENDA" id="4.2.1.20">
    <property type="organism ID" value="399"/>
</dbReference>
<dbReference type="UniPathway" id="UPA00035">
    <property type="reaction ID" value="UER00044"/>
</dbReference>
<dbReference type="CD-CODE" id="4299E36E">
    <property type="entry name" value="Nucleolus"/>
</dbReference>
<dbReference type="PRO" id="PR:P14671"/>
<dbReference type="Proteomes" id="UP000006548">
    <property type="component" value="Chromosome 5"/>
</dbReference>
<dbReference type="ExpressionAtlas" id="P14671">
    <property type="expression patterns" value="baseline and differential"/>
</dbReference>
<dbReference type="GO" id="GO:0009507">
    <property type="term" value="C:chloroplast"/>
    <property type="evidence" value="ECO:0007005"/>
    <property type="project" value="TAIR"/>
</dbReference>
<dbReference type="GO" id="GO:0009570">
    <property type="term" value="C:chloroplast stroma"/>
    <property type="evidence" value="ECO:0007005"/>
    <property type="project" value="TAIR"/>
</dbReference>
<dbReference type="GO" id="GO:0005886">
    <property type="term" value="C:plasma membrane"/>
    <property type="evidence" value="ECO:0007005"/>
    <property type="project" value="TAIR"/>
</dbReference>
<dbReference type="GO" id="GO:0019904">
    <property type="term" value="F:protein domain specific binding"/>
    <property type="evidence" value="ECO:0000353"/>
    <property type="project" value="CAFA"/>
</dbReference>
<dbReference type="GO" id="GO:0004834">
    <property type="term" value="F:tryptophan synthase activity"/>
    <property type="evidence" value="ECO:0000314"/>
    <property type="project" value="TAIR"/>
</dbReference>
<dbReference type="GO" id="GO:0009684">
    <property type="term" value="P:indoleacetic acid biosynthetic process"/>
    <property type="evidence" value="ECO:0000304"/>
    <property type="project" value="TAIR"/>
</dbReference>
<dbReference type="GO" id="GO:0006979">
    <property type="term" value="P:response to oxidative stress"/>
    <property type="evidence" value="ECO:0000270"/>
    <property type="project" value="TAIR"/>
</dbReference>
<dbReference type="CDD" id="cd06446">
    <property type="entry name" value="Trp-synth_B"/>
    <property type="match status" value="1"/>
</dbReference>
<dbReference type="FunFam" id="3.40.50.1100:FF:000001">
    <property type="entry name" value="Tryptophan synthase beta chain"/>
    <property type="match status" value="1"/>
</dbReference>
<dbReference type="FunFam" id="3.40.50.1100:FF:000004">
    <property type="entry name" value="Tryptophan synthase beta chain"/>
    <property type="match status" value="1"/>
</dbReference>
<dbReference type="Gene3D" id="3.40.50.1100">
    <property type="match status" value="2"/>
</dbReference>
<dbReference type="HAMAP" id="MF_00133">
    <property type="entry name" value="Trp_synth_beta"/>
    <property type="match status" value="1"/>
</dbReference>
<dbReference type="InterPro" id="IPR006653">
    <property type="entry name" value="Trp_synth_b_CS"/>
</dbReference>
<dbReference type="InterPro" id="IPR006654">
    <property type="entry name" value="Trp_synth_beta"/>
</dbReference>
<dbReference type="InterPro" id="IPR023026">
    <property type="entry name" value="Trp_synth_beta/beta-like"/>
</dbReference>
<dbReference type="InterPro" id="IPR001926">
    <property type="entry name" value="TrpB-like_PALP"/>
</dbReference>
<dbReference type="InterPro" id="IPR036052">
    <property type="entry name" value="TrpB-like_PALP_sf"/>
</dbReference>
<dbReference type="NCBIfam" id="TIGR00263">
    <property type="entry name" value="trpB"/>
    <property type="match status" value="1"/>
</dbReference>
<dbReference type="PANTHER" id="PTHR48077:SF3">
    <property type="entry name" value="TRYPTOPHAN SYNTHASE"/>
    <property type="match status" value="1"/>
</dbReference>
<dbReference type="PANTHER" id="PTHR48077">
    <property type="entry name" value="TRYPTOPHAN SYNTHASE-RELATED"/>
    <property type="match status" value="1"/>
</dbReference>
<dbReference type="Pfam" id="PF00291">
    <property type="entry name" value="PALP"/>
    <property type="match status" value="1"/>
</dbReference>
<dbReference type="PIRSF" id="PIRSF001413">
    <property type="entry name" value="Trp_syn_beta"/>
    <property type="match status" value="1"/>
</dbReference>
<dbReference type="SUPFAM" id="SSF53686">
    <property type="entry name" value="Tryptophan synthase beta subunit-like PLP-dependent enzymes"/>
    <property type="match status" value="1"/>
</dbReference>
<dbReference type="PROSITE" id="PS00168">
    <property type="entry name" value="TRP_SYNTHASE_BETA"/>
    <property type="match status" value="1"/>
</dbReference>
<protein>
    <recommendedName>
        <fullName>Tryptophan synthase beta chain 1, chloroplastic</fullName>
        <ecNumber>4.2.1.20</ecNumber>
    </recommendedName>
</protein>
<gene>
    <name type="primary">TSB1</name>
    <name type="ordered locus">At5g54810</name>
    <name type="ORF">MBG8.7</name>
</gene>
<sequence>MAASGTSATFRASVSSAPSSSSQLTHLKSPFKAVKYTPLPSSRSKSSSFSVSCTIAKDPPVLMAAGSDPALWQRPDSFGRFGKFGGKYVPETLMHALSELESAFYALATDDDFQRELAGILKDYVGRESPLYFAERLTEHYRRENGEGPLIYLKREDLNHTGAHKINNAVAQALLAKRLGKKRIIAETGAGQHGVATATVCARFGLECIIYMGAQDMERQALNVFRMRLLGAEVRGVHSGTATLKDATSEAIRDWVTNVETTHYILGSVAGPHPYPMMVRDFHAVIGKETRKQALEKWGGKPDVLVACVGGGSNAMGLFHEFVNDTEVRMIGVEAAGFGLDSGKHAATLTKGDVGVLHGAMSYLLQDDDGQIIEPHSISAGLDYPGVGPEHSFFKDMGRAEYYSITDEEALEAFKRVSRLEGIIPALETSHALAYLEKLCPTLSDGTRVVLNFSGRGDKDVQTVAKYLDV</sequence>
<name>TRPB1_ARATH</name>
<accession>P14671</accession>
<reference key="1">
    <citation type="journal article" date="1989" name="Proc. Natl. Acad. Sci. U.S.A.">
        <title>A gene encoding the tryptophan synthase beta subunit of Arabidopsis thaliana.</title>
        <authorList>
            <person name="Berlyn M.B."/>
            <person name="Last R.L."/>
            <person name="Fink G.R."/>
        </authorList>
    </citation>
    <scope>NUCLEOTIDE SEQUENCE [GENOMIC DNA]</scope>
    <source>
        <strain>cv. Columbia</strain>
    </source>
</reference>
<reference key="2">
    <citation type="journal article" date="1997" name="DNA Res.">
        <title>Structural analysis of Arabidopsis thaliana chromosome 5. I. Sequence features of the 1.6 Mb regions covered by twenty physically assigned P1 clones.</title>
        <authorList>
            <person name="Sato S."/>
            <person name="Kotani H."/>
            <person name="Nakamura Y."/>
            <person name="Kaneko T."/>
            <person name="Asamizu E."/>
            <person name="Fukami M."/>
            <person name="Miyajima N."/>
            <person name="Tabata S."/>
        </authorList>
    </citation>
    <scope>NUCLEOTIDE SEQUENCE [LARGE SCALE GENOMIC DNA]</scope>
    <source>
        <strain>cv. Columbia</strain>
    </source>
</reference>
<reference key="3">
    <citation type="journal article" date="2017" name="Plant J.">
        <title>Araport11: a complete reannotation of the Arabidopsis thaliana reference genome.</title>
        <authorList>
            <person name="Cheng C.Y."/>
            <person name="Krishnakumar V."/>
            <person name="Chan A.P."/>
            <person name="Thibaud-Nissen F."/>
            <person name="Schobel S."/>
            <person name="Town C.D."/>
        </authorList>
    </citation>
    <scope>GENOME REANNOTATION</scope>
    <source>
        <strain>cv. Columbia</strain>
    </source>
</reference>
<reference key="4">
    <citation type="journal article" date="2003" name="Science">
        <title>Empirical analysis of transcriptional activity in the Arabidopsis genome.</title>
        <authorList>
            <person name="Yamada K."/>
            <person name="Lim J."/>
            <person name="Dale J.M."/>
            <person name="Chen H."/>
            <person name="Shinn P."/>
            <person name="Palm C.J."/>
            <person name="Southwick A.M."/>
            <person name="Wu H.C."/>
            <person name="Kim C.J."/>
            <person name="Nguyen M."/>
            <person name="Pham P.K."/>
            <person name="Cheuk R.F."/>
            <person name="Karlin-Newmann G."/>
            <person name="Liu S.X."/>
            <person name="Lam B."/>
            <person name="Sakano H."/>
            <person name="Wu T."/>
            <person name="Yu G."/>
            <person name="Miranda M."/>
            <person name="Quach H.L."/>
            <person name="Tripp M."/>
            <person name="Chang C.H."/>
            <person name="Lee J.M."/>
            <person name="Toriumi M.J."/>
            <person name="Chan M.M."/>
            <person name="Tang C.C."/>
            <person name="Onodera C.S."/>
            <person name="Deng J.M."/>
            <person name="Akiyama K."/>
            <person name="Ansari Y."/>
            <person name="Arakawa T."/>
            <person name="Banh J."/>
            <person name="Banno F."/>
            <person name="Bowser L."/>
            <person name="Brooks S.Y."/>
            <person name="Carninci P."/>
            <person name="Chao Q."/>
            <person name="Choy N."/>
            <person name="Enju A."/>
            <person name="Goldsmith A.D."/>
            <person name="Gurjal M."/>
            <person name="Hansen N.F."/>
            <person name="Hayashizaki Y."/>
            <person name="Johnson-Hopson C."/>
            <person name="Hsuan V.W."/>
            <person name="Iida K."/>
            <person name="Karnes M."/>
            <person name="Khan S."/>
            <person name="Koesema E."/>
            <person name="Ishida J."/>
            <person name="Jiang P.X."/>
            <person name="Jones T."/>
            <person name="Kawai J."/>
            <person name="Kamiya A."/>
            <person name="Meyers C."/>
            <person name="Nakajima M."/>
            <person name="Narusaka M."/>
            <person name="Seki M."/>
            <person name="Sakurai T."/>
            <person name="Satou M."/>
            <person name="Tamse R."/>
            <person name="Vaysberg M."/>
            <person name="Wallender E.K."/>
            <person name="Wong C."/>
            <person name="Yamamura Y."/>
            <person name="Yuan S."/>
            <person name="Shinozaki K."/>
            <person name="Davis R.W."/>
            <person name="Theologis A."/>
            <person name="Ecker J.R."/>
        </authorList>
    </citation>
    <scope>NUCLEOTIDE SEQUENCE [LARGE SCALE MRNA]</scope>
    <source>
        <strain>cv. Columbia</strain>
    </source>
</reference>
<reference key="5">
    <citation type="submission" date="2002-03" db="EMBL/GenBank/DDBJ databases">
        <title>Full-length cDNA from Arabidopsis thaliana.</title>
        <authorList>
            <person name="Brover V.V."/>
            <person name="Troukhan M.E."/>
            <person name="Alexandrov N.A."/>
            <person name="Lu Y.-P."/>
            <person name="Flavell R.B."/>
            <person name="Feldmann K.A."/>
        </authorList>
    </citation>
    <scope>NUCLEOTIDE SEQUENCE [LARGE SCALE MRNA]</scope>
</reference>